<comment type="function">
    <text evidence="1">This is one of the proteins that bind and probably mediate the attachment of the 5S RNA into the large ribosomal subunit, where it forms part of the central protuberance. In the 70S ribosome it contacts protein S13 of the 30S subunit (bridge B1b), connecting the 2 subunits; this bridge is implicated in subunit movement. Contacts the P site tRNA; the 5S rRNA and some of its associated proteins might help stabilize positioning of ribosome-bound tRNAs.</text>
</comment>
<comment type="subunit">
    <text evidence="1">Part of the 50S ribosomal subunit; part of the 5S rRNA/L5/L18/L25 subcomplex. Contacts the 5S rRNA and the P site tRNA. Forms a bridge to the 30S subunit in the 70S ribosome.</text>
</comment>
<comment type="similarity">
    <text evidence="1">Belongs to the universal ribosomal protein uL5 family.</text>
</comment>
<sequence>MNRLKDQYLKEIVPALMSKFNYDSVMEVPKIDKIVINTGVGDATANAKVLDSAVEELALITGQKPVITKAKNSIAGFRLREGMPIGAKVTLRGERMYDFLDKLVTVSLPRVRDFRGVSKKAFDGRGNYTLGVREQLIFPEIDYDQVSKVRGMDVVIVTTAKSDEESHELLTQLGMPFQK</sequence>
<name>RL5_LISMH</name>
<protein>
    <recommendedName>
        <fullName evidence="1">Large ribosomal subunit protein uL5</fullName>
    </recommendedName>
    <alternativeName>
        <fullName evidence="2">50S ribosomal protein L5</fullName>
    </alternativeName>
</protein>
<organism>
    <name type="scientific">Listeria monocytogenes serotype 4a (strain HCC23)</name>
    <dbReference type="NCBI Taxonomy" id="552536"/>
    <lineage>
        <taxon>Bacteria</taxon>
        <taxon>Bacillati</taxon>
        <taxon>Bacillota</taxon>
        <taxon>Bacilli</taxon>
        <taxon>Bacillales</taxon>
        <taxon>Listeriaceae</taxon>
        <taxon>Listeria</taxon>
    </lineage>
</organism>
<keyword id="KW-0687">Ribonucleoprotein</keyword>
<keyword id="KW-0689">Ribosomal protein</keyword>
<keyword id="KW-0694">RNA-binding</keyword>
<keyword id="KW-0699">rRNA-binding</keyword>
<keyword id="KW-0820">tRNA-binding</keyword>
<evidence type="ECO:0000255" key="1">
    <source>
        <dbReference type="HAMAP-Rule" id="MF_01333"/>
    </source>
</evidence>
<evidence type="ECO:0000305" key="2"/>
<proteinExistence type="inferred from homology"/>
<feature type="chain" id="PRO_1000166137" description="Large ribosomal subunit protein uL5">
    <location>
        <begin position="1"/>
        <end position="179"/>
    </location>
</feature>
<dbReference type="EMBL" id="CP001175">
    <property type="protein sequence ID" value="ACK41245.1"/>
    <property type="molecule type" value="Genomic_DNA"/>
</dbReference>
<dbReference type="RefSeq" id="WP_003720938.1">
    <property type="nucleotide sequence ID" value="NC_011660.1"/>
</dbReference>
<dbReference type="SMR" id="B8DB20"/>
<dbReference type="GeneID" id="93240501"/>
<dbReference type="KEGG" id="lmh:LMHCC_2914"/>
<dbReference type="HOGENOM" id="CLU_061015_2_1_9"/>
<dbReference type="GO" id="GO:1990904">
    <property type="term" value="C:ribonucleoprotein complex"/>
    <property type="evidence" value="ECO:0007669"/>
    <property type="project" value="UniProtKB-KW"/>
</dbReference>
<dbReference type="GO" id="GO:0005840">
    <property type="term" value="C:ribosome"/>
    <property type="evidence" value="ECO:0007669"/>
    <property type="project" value="UniProtKB-KW"/>
</dbReference>
<dbReference type="GO" id="GO:0019843">
    <property type="term" value="F:rRNA binding"/>
    <property type="evidence" value="ECO:0007669"/>
    <property type="project" value="UniProtKB-UniRule"/>
</dbReference>
<dbReference type="GO" id="GO:0003735">
    <property type="term" value="F:structural constituent of ribosome"/>
    <property type="evidence" value="ECO:0007669"/>
    <property type="project" value="InterPro"/>
</dbReference>
<dbReference type="GO" id="GO:0000049">
    <property type="term" value="F:tRNA binding"/>
    <property type="evidence" value="ECO:0007669"/>
    <property type="project" value="UniProtKB-UniRule"/>
</dbReference>
<dbReference type="GO" id="GO:0006412">
    <property type="term" value="P:translation"/>
    <property type="evidence" value="ECO:0007669"/>
    <property type="project" value="UniProtKB-UniRule"/>
</dbReference>
<dbReference type="FunFam" id="3.30.1440.10:FF:000001">
    <property type="entry name" value="50S ribosomal protein L5"/>
    <property type="match status" value="1"/>
</dbReference>
<dbReference type="Gene3D" id="3.30.1440.10">
    <property type="match status" value="1"/>
</dbReference>
<dbReference type="HAMAP" id="MF_01333_B">
    <property type="entry name" value="Ribosomal_uL5_B"/>
    <property type="match status" value="1"/>
</dbReference>
<dbReference type="InterPro" id="IPR002132">
    <property type="entry name" value="Ribosomal_uL5"/>
</dbReference>
<dbReference type="InterPro" id="IPR020930">
    <property type="entry name" value="Ribosomal_uL5_bac-type"/>
</dbReference>
<dbReference type="InterPro" id="IPR031309">
    <property type="entry name" value="Ribosomal_uL5_C"/>
</dbReference>
<dbReference type="InterPro" id="IPR020929">
    <property type="entry name" value="Ribosomal_uL5_CS"/>
</dbReference>
<dbReference type="InterPro" id="IPR022803">
    <property type="entry name" value="Ribosomal_uL5_dom_sf"/>
</dbReference>
<dbReference type="InterPro" id="IPR031310">
    <property type="entry name" value="Ribosomal_uL5_N"/>
</dbReference>
<dbReference type="NCBIfam" id="NF000585">
    <property type="entry name" value="PRK00010.1"/>
    <property type="match status" value="1"/>
</dbReference>
<dbReference type="PANTHER" id="PTHR11994">
    <property type="entry name" value="60S RIBOSOMAL PROTEIN L11-RELATED"/>
    <property type="match status" value="1"/>
</dbReference>
<dbReference type="Pfam" id="PF00281">
    <property type="entry name" value="Ribosomal_L5"/>
    <property type="match status" value="1"/>
</dbReference>
<dbReference type="Pfam" id="PF00673">
    <property type="entry name" value="Ribosomal_L5_C"/>
    <property type="match status" value="1"/>
</dbReference>
<dbReference type="PIRSF" id="PIRSF002161">
    <property type="entry name" value="Ribosomal_L5"/>
    <property type="match status" value="1"/>
</dbReference>
<dbReference type="SUPFAM" id="SSF55282">
    <property type="entry name" value="RL5-like"/>
    <property type="match status" value="1"/>
</dbReference>
<dbReference type="PROSITE" id="PS00358">
    <property type="entry name" value="RIBOSOMAL_L5"/>
    <property type="match status" value="1"/>
</dbReference>
<reference key="1">
    <citation type="journal article" date="2011" name="J. Bacteriol.">
        <title>Genome sequence of lineage III Listeria monocytogenes strain HCC23.</title>
        <authorList>
            <person name="Steele C.L."/>
            <person name="Donaldson J.R."/>
            <person name="Paul D."/>
            <person name="Banes M.M."/>
            <person name="Arick T."/>
            <person name="Bridges S.M."/>
            <person name="Lawrence M.L."/>
        </authorList>
    </citation>
    <scope>NUCLEOTIDE SEQUENCE [LARGE SCALE GENOMIC DNA]</scope>
    <source>
        <strain>HCC23</strain>
    </source>
</reference>
<gene>
    <name evidence="1" type="primary">rplE</name>
    <name type="ordered locus">LMHCC_2914</name>
</gene>
<accession>B8DB20</accession>